<proteinExistence type="evidence at protein level"/>
<evidence type="ECO:0000250" key="1">
    <source>
        <dbReference type="UniProtKB" id="Q13127"/>
    </source>
</evidence>
<evidence type="ECO:0000250" key="2">
    <source>
        <dbReference type="UniProtKB" id="Q8VIG1"/>
    </source>
</evidence>
<evidence type="ECO:0000255" key="3">
    <source>
        <dbReference type="PROSITE-ProRule" id="PRU00042"/>
    </source>
</evidence>
<evidence type="ECO:0000256" key="4">
    <source>
        <dbReference type="SAM" id="MobiDB-lite"/>
    </source>
</evidence>
<evidence type="ECO:0000269" key="5">
    <source>
    </source>
</evidence>
<evidence type="ECO:0000269" key="6">
    <source>
    </source>
</evidence>
<evidence type="ECO:0000269" key="7">
    <source>
    </source>
</evidence>
<evidence type="ECO:0000269" key="8">
    <source>
    </source>
</evidence>
<evidence type="ECO:0000269" key="9">
    <source>
    </source>
</evidence>
<evidence type="ECO:0000269" key="10">
    <source>
    </source>
</evidence>
<evidence type="ECO:0000303" key="11">
    <source>
    </source>
</evidence>
<evidence type="ECO:0007744" key="12">
    <source>
    </source>
</evidence>
<protein>
    <recommendedName>
        <fullName>RE1-silencing transcription factor</fullName>
    </recommendedName>
    <alternativeName>
        <fullName>Neural-restrictive silencer factor</fullName>
    </alternativeName>
</protein>
<comment type="function">
    <text evidence="1 2 6 7 8 9 10">Transcriptional repressor which binds neuron-restrictive silencer element (NRSE) and represses neuronal gene transcription in non-neuronal cells (By similarity). Restricts the expression of neuronal genes by associating with two distinct corepressors, SIN3A and RCOR1, which in turn recruit histone deacetylase to the promoters of REST-regulated genes (By similarity). Mediates repression by recruiting the BHC complex at RE1/NRSE sites which acts by deacetylating and demethylating specific sites on histones, thereby acting as a chromatin modifier (PubMed:9454838). Transcriptional repression by REST-CDYL via the recruitment of histone methyltransferase EHMT2 may be important in transformation suppression (By similarity). Represses the expression of SRRM4 in non-neural cells to prevent the activation of neural-specific splicing events and to prevent production of REST isoform 6 (By similarity). Repressor activity may be inhibited by forming heterodimers with isoform 6, thereby preventing binding to NRSE or binding to corepressors and leading to derepression of target genes (By similarity). Also maintains repression of neuronal genes in neural stem cells, and allows transcription and differentiation into neurons by dissociation from RE1/NRSE sites of target genes (By similarity). Thereby is involved in maintaining the quiescent state of adult hippocampal neural stem cells and preventing premature differentiation into mature neurons (By similarity). Plays a role in the developmental switch in synaptic NMDA receptor composition during postnatal development, by repressing GRIN2B expression and thereby altering NMDA receptor properties from containing primarily GRIN2B to primarily GRIN2A subunits (PubMed:22960932). Acts as a regulator of osteoblast differentiation (By similarity). Key repressor of gene expression in hypoxia; represses genes in hypoxia by direct binding to an RE1/NRSE site on their promoter regions (By similarity). May also function in stress resistance in the brain during aging; possibly by regulating expression of genes involved in cell death and in the stress response (By similarity). Repressor of gene expression in the hippocampus after ischemia by directly binding to RE1/NRSE sites and recruiting SIN3A and RCOR1 to promoters of target genes, thereby promoting changes in chromatin modifications and ischemia-induced cell death (PubMed:12657670, PubMed:22371606). After ischemia, might play a role in repression of miR-132 expression in hippocampal neurons, thereby leading to neuronal cell death (PubMed:25108103).</text>
</comment>
<comment type="function">
    <molecule>Isoform 6</molecule>
    <text evidence="1 2">Binds to the 3' region of the neuron-restrictive silencer element (NRSE), with lower affinity than full-length REST isoform 1 (By similarity). Exhibits weaker repressor activity compared to isoform 1 (By similarity). May negatively regulate the repressor activity of isoform 1 by binding to isoform 1, thereby preventing its binding to NRSE and leading to derepression of target genes (By similarity). However, in another study, does not appear to be implicated in repressor activity of a NRSE motif-containing reporter construct nor in inhibitory activity on the isoform 1 transcriptional repressor activity (By similarity). Post-transcriptional inactivation of REST by SRRM4-dependent alternative splicing into isoform 6 is required in mechanosensory hair cells in the inner ear for derepression of neuronal genes and hearing (By similarity).</text>
</comment>
<comment type="subunit">
    <text evidence="1 2">Isoform 1 and isoform 6 form heterodimers (By similarity). Isoform 6: Forms homodimers and homooligomers; binds to the neuron-restrictive silencer element (NRSE) as monomer (By similarity). Interacts with SIN3A, SIN3B and RCOR1 (By similarity). Interacts with CDYL (By similarity). Interacts with EHMT1 and EHMT2 only in the presence of CDYL (By similarity). Part of a complex containing at least CDYL, REST, WIZ, SETB1, EHMT1 and EHMT2 (By similarity). Interacts (via zinc-finger DNA-binding domain) with ZFP90 (via N- and C-termini); the interaction inhibits REST repressor activity (By similarity). Interacts (via C2H2-type zinc finger 5) with PRICKLE1 (By similarity). Interacts with FBXW11 and BTRC (By similarity). Interacts with USP7 (By similarity).</text>
</comment>
<comment type="subcellular location">
    <subcellularLocation>
        <location evidence="5 6 7 8">Nucleus</location>
    </subcellularLocation>
    <subcellularLocation>
        <location evidence="1">Cytoplasm</location>
    </subcellularLocation>
    <text evidence="1 2">Colocalizes with ZFP90 in the nucleus (By similarity). In response to hypoxia, there is a more pronounced increase in levels in the nucleus as compared to the cytoplasm (By similarity). In aging neurons, increased levels in the nucleus as compared to the cytoplasm (By similarity).</text>
</comment>
<comment type="subcellular location">
    <molecule>Isoform 6</molecule>
    <subcellularLocation>
        <location evidence="1">Nucleus</location>
    </subcellularLocation>
</comment>
<comment type="alternative products">
    <event type="alternative splicing"/>
    <isoform>
        <id>O54963-1</id>
        <name>1</name>
        <sequence type="displayed"/>
    </isoform>
    <isoform>
        <id>O54963-2</id>
        <name>2</name>
        <sequence type="described" ref="VSP_022074 VSP_022075"/>
    </isoform>
    <isoform>
        <id>O54963-3</id>
        <name>3</name>
        <name>REST1</name>
        <sequence type="described" ref="VSP_022073"/>
    </isoform>
    <isoform>
        <id>O54963-4</id>
        <name>4</name>
        <name>REST2</name>
        <sequence type="described" ref="VSP_022079 VSP_022080"/>
    </isoform>
    <isoform>
        <id>O54963-5</id>
        <name>5</name>
        <name>REST3</name>
        <sequence type="described" ref="VSP_022078 VSP_022081"/>
    </isoform>
    <isoform>
        <id>O54963-6</id>
        <name>6</name>
        <name>REST4</name>
        <sequence type="described" ref="VSP_022077 VSP_022082"/>
    </isoform>
    <isoform>
        <id>O54963-7</id>
        <name>7</name>
        <name>REST5</name>
        <sequence type="described" ref="VSP_022076 VSP_022083"/>
    </isoform>
</comment>
<comment type="tissue specificity">
    <text evidence="6 7 8 9 10">Expressed in the hippocampus including the granule cell layer of the dentate gyrus, the pyramidal cell layers of CA1 and CA3, the apical and basilar dendrite layers of the stratum radiatum and stratum oriens of CA1, the stratum lucidum and stratum oriens of CA3 and in astroglia (at protein level) (PubMed:12657670, PubMed:22371606, PubMed:22960932). Expressed in the brain, with the highest levels in the neurons of hippocampus, pons/medulla and midbrain (PubMed:25108103, PubMed:9454838).</text>
</comment>
<comment type="developmental stage">
    <text evidence="8 10">Levels decrease during embryonic brain development (PubMed:9454838). Expressed during postnatal days P3 to P60, with an increase in expression at postnatal day P14-P15 (PubMed:22960932). Increased abundance in the nucleus at P14-P15 relative to P9 (PubMed:22960932).</text>
</comment>
<comment type="induction">
    <text evidence="6 7 8 9 10">Up-regulated by kainic acid (PubMed:9454838). Up-regulated in the pyramidal cell layer of CA1 in the hippocampus by global ischemia (PubMed:12657670, PubMed:22371606, PubMed:25108103). Down-regulated in the hippocampus by maternal deprivation (PubMed:22960932).</text>
</comment>
<comment type="domain">
    <text evidence="1">The C2H2-type zinc finger 5 is required for nuclear localization.</text>
</comment>
<comment type="PTM">
    <text evidence="2">O-glycosylated.</text>
</comment>
<comment type="PTM">
    <text evidence="1">Phosphorylated; phosphorylation is required for ubiquitination.</text>
</comment>
<comment type="PTM">
    <text evidence="1">Ubiquitinated; ubiquitination is mediated by BTRC and leads to proteasomal degradation in G2 phase (By similarity). Ubiquitination increases during neuronal differentiation (By similarity). Deubiquitinated by USP7; leading to its stabilization and promoting the maintenance of neural progenitor cells (By similarity).</text>
</comment>
<comment type="miscellaneous">
    <molecule>Isoform 6</molecule>
    <text evidence="2">Produced by SRRM4-dependent alternative splicing in neurons and inner ear hair cells (By similarity). Lacks the four C-terminal zinc fingers and the RCOR1 corepressor interaction site found in full length REST isoform 1, which are required for full DNA-binding and repressive activity (By similarity).</text>
</comment>
<comment type="caution">
    <text evidence="1 2">Isoform 6: Controversial data exists concerning the repressor activity of isoform 6. In human, a study showed that human isoform 3 exhibits weak repressor activity of a NRSE motif-containing reporter construct (By similarity). Another report, however, does not observe any isoform 3 repressor activity of a NRSE motif-containing reporter construct (By similarity). Isoform 6: Controversial data also exists regarding the function of isoform 6 on the negative regulation of isoform 1. In mouse, it was shown that isoform 2 negatively regulates the repressor activity of isoform 1 by binding to isoform 1, thereby preventing its binding to NRSE and leading to derepression of target genes (By similarity). Another study in human, however, did not observe any inhibitory activity of human isoform 3 on the isoform 1 transcriptional repressor activity (By similarity).</text>
</comment>
<accession>O54963</accession>
<accession>O54964</accession>
<gene>
    <name type="primary">Rest</name>
    <name type="synonym">Nrsf</name>
</gene>
<dbReference type="EMBL" id="AF037199">
    <property type="protein sequence ID" value="AAB94893.1"/>
    <property type="molecule type" value="mRNA"/>
</dbReference>
<dbReference type="EMBL" id="AF037203">
    <property type="protein sequence ID" value="AAB94894.1"/>
    <property type="molecule type" value="mRNA"/>
</dbReference>
<dbReference type="RefSeq" id="NP_113976.1">
    <property type="nucleotide sequence ID" value="NM_031788.1"/>
</dbReference>
<dbReference type="BMRB" id="O54963"/>
<dbReference type="SMR" id="O54963"/>
<dbReference type="BioGRID" id="249783">
    <property type="interactions" value="2"/>
</dbReference>
<dbReference type="FunCoup" id="O54963">
    <property type="interactions" value="1190"/>
</dbReference>
<dbReference type="STRING" id="10116.ENSRNOP00000002844"/>
<dbReference type="CarbonylDB" id="O54963"/>
<dbReference type="iPTMnet" id="O54963"/>
<dbReference type="PhosphoSitePlus" id="O54963"/>
<dbReference type="PaxDb" id="10116-ENSRNOP00000002837"/>
<dbReference type="GeneID" id="83618"/>
<dbReference type="KEGG" id="rno:83618"/>
<dbReference type="UCSC" id="RGD:621069">
    <molecule id="O54963-1"/>
    <property type="organism name" value="rat"/>
</dbReference>
<dbReference type="AGR" id="RGD:621069"/>
<dbReference type="CTD" id="5978"/>
<dbReference type="RGD" id="621069">
    <property type="gene designation" value="Rest"/>
</dbReference>
<dbReference type="eggNOG" id="KOG1721">
    <property type="taxonomic scope" value="Eukaryota"/>
</dbReference>
<dbReference type="InParanoid" id="O54963"/>
<dbReference type="PhylomeDB" id="O54963"/>
<dbReference type="Reactome" id="R-RNO-3214815">
    <property type="pathway name" value="HDACs deacetylate histones"/>
</dbReference>
<dbReference type="PRO" id="PR:O54963"/>
<dbReference type="Proteomes" id="UP000002494">
    <property type="component" value="Unplaced"/>
</dbReference>
<dbReference type="GO" id="GO:0000785">
    <property type="term" value="C:chromatin"/>
    <property type="evidence" value="ECO:0000314"/>
    <property type="project" value="RGD"/>
</dbReference>
<dbReference type="GO" id="GO:0005737">
    <property type="term" value="C:cytoplasm"/>
    <property type="evidence" value="ECO:0000250"/>
    <property type="project" value="UniProtKB"/>
</dbReference>
<dbReference type="GO" id="GO:0005829">
    <property type="term" value="C:cytosol"/>
    <property type="evidence" value="ECO:0000266"/>
    <property type="project" value="RGD"/>
</dbReference>
<dbReference type="GO" id="GO:0005634">
    <property type="term" value="C:nucleus"/>
    <property type="evidence" value="ECO:0000314"/>
    <property type="project" value="UniProtKB"/>
</dbReference>
<dbReference type="GO" id="GO:0032991">
    <property type="term" value="C:protein-containing complex"/>
    <property type="evidence" value="ECO:0000314"/>
    <property type="project" value="RGD"/>
</dbReference>
<dbReference type="GO" id="GO:0017053">
    <property type="term" value="C:transcription repressor complex"/>
    <property type="evidence" value="ECO:0000314"/>
    <property type="project" value="UniProtKB"/>
</dbReference>
<dbReference type="GO" id="GO:0003682">
    <property type="term" value="F:chromatin binding"/>
    <property type="evidence" value="ECO:0000250"/>
    <property type="project" value="UniProtKB"/>
</dbReference>
<dbReference type="GO" id="GO:0003677">
    <property type="term" value="F:DNA binding"/>
    <property type="evidence" value="ECO:0000314"/>
    <property type="project" value="RGD"/>
</dbReference>
<dbReference type="GO" id="GO:0003700">
    <property type="term" value="F:DNA-binding transcription factor activity"/>
    <property type="evidence" value="ECO:0000314"/>
    <property type="project" value="UniProtKB"/>
</dbReference>
<dbReference type="GO" id="GO:0001227">
    <property type="term" value="F:DNA-binding transcription repressor activity, RNA polymerase II-specific"/>
    <property type="evidence" value="ECO:0000314"/>
    <property type="project" value="UniProtKB"/>
</dbReference>
<dbReference type="GO" id="GO:0042802">
    <property type="term" value="F:identical protein binding"/>
    <property type="evidence" value="ECO:0000250"/>
    <property type="project" value="UniProtKB"/>
</dbReference>
<dbReference type="GO" id="GO:1990841">
    <property type="term" value="F:promoter-specific chromatin binding"/>
    <property type="evidence" value="ECO:0000314"/>
    <property type="project" value="RGD"/>
</dbReference>
<dbReference type="GO" id="GO:0044877">
    <property type="term" value="F:protein-containing complex binding"/>
    <property type="evidence" value="ECO:0000314"/>
    <property type="project" value="RGD"/>
</dbReference>
<dbReference type="GO" id="GO:0000978">
    <property type="term" value="F:RNA polymerase II cis-regulatory region sequence-specific DNA binding"/>
    <property type="evidence" value="ECO:0000250"/>
    <property type="project" value="UniProtKB"/>
</dbReference>
<dbReference type="GO" id="GO:0000979">
    <property type="term" value="F:RNA polymerase II core promoter sequence-specific DNA binding"/>
    <property type="evidence" value="ECO:0000266"/>
    <property type="project" value="RGD"/>
</dbReference>
<dbReference type="GO" id="GO:0061629">
    <property type="term" value="F:RNA polymerase II-specific DNA-binding transcription factor binding"/>
    <property type="evidence" value="ECO:0000353"/>
    <property type="project" value="UniProtKB"/>
</dbReference>
<dbReference type="GO" id="GO:0043565">
    <property type="term" value="F:sequence-specific DNA binding"/>
    <property type="evidence" value="ECO:0000314"/>
    <property type="project" value="UniProtKB"/>
</dbReference>
<dbReference type="GO" id="GO:0000976">
    <property type="term" value="F:transcription cis-regulatory region binding"/>
    <property type="evidence" value="ECO:0000250"/>
    <property type="project" value="UniProtKB"/>
</dbReference>
<dbReference type="GO" id="GO:0008270">
    <property type="term" value="F:zinc ion binding"/>
    <property type="evidence" value="ECO:0007669"/>
    <property type="project" value="UniProtKB-KW"/>
</dbReference>
<dbReference type="GO" id="GO:0060088">
    <property type="term" value="P:auditory receptor cell stereocilium organization"/>
    <property type="evidence" value="ECO:0000250"/>
    <property type="project" value="UniProtKB"/>
</dbReference>
<dbReference type="GO" id="GO:0060379">
    <property type="term" value="P:cardiac muscle cell myoblast differentiation"/>
    <property type="evidence" value="ECO:0000250"/>
    <property type="project" value="UniProtKB"/>
</dbReference>
<dbReference type="GO" id="GO:0071257">
    <property type="term" value="P:cellular response to electrical stimulus"/>
    <property type="evidence" value="ECO:0000250"/>
    <property type="project" value="UniProtKB"/>
</dbReference>
<dbReference type="GO" id="GO:0071385">
    <property type="term" value="P:cellular response to glucocorticoid stimulus"/>
    <property type="evidence" value="ECO:0000250"/>
    <property type="project" value="UniProtKB"/>
</dbReference>
<dbReference type="GO" id="GO:0033554">
    <property type="term" value="P:cellular response to stress"/>
    <property type="evidence" value="ECO:0000266"/>
    <property type="project" value="RGD"/>
</dbReference>
<dbReference type="GO" id="GO:0071466">
    <property type="term" value="P:cellular response to xenobiotic stimulus"/>
    <property type="evidence" value="ECO:0000266"/>
    <property type="project" value="RGD"/>
</dbReference>
<dbReference type="GO" id="GO:0006338">
    <property type="term" value="P:chromatin remodeling"/>
    <property type="evidence" value="ECO:0000315"/>
    <property type="project" value="UniProtKB"/>
</dbReference>
<dbReference type="GO" id="GO:0050910">
    <property type="term" value="P:detection of mechanical stimulus involved in sensory perception of sound"/>
    <property type="evidence" value="ECO:0000250"/>
    <property type="project" value="UniProtKB"/>
</dbReference>
<dbReference type="GO" id="GO:0002244">
    <property type="term" value="P:hematopoietic progenitor cell differentiation"/>
    <property type="evidence" value="ECO:0000266"/>
    <property type="project" value="RGD"/>
</dbReference>
<dbReference type="GO" id="GO:0099563">
    <property type="term" value="P:modification of synaptic structure"/>
    <property type="evidence" value="ECO:0000315"/>
    <property type="project" value="UniProtKB"/>
</dbReference>
<dbReference type="GO" id="GO:0043922">
    <property type="term" value="P:negative regulation by host of viral transcription"/>
    <property type="evidence" value="ECO:0000250"/>
    <property type="project" value="UniProtKB"/>
</dbReference>
<dbReference type="GO" id="GO:0032348">
    <property type="term" value="P:negative regulation of aldosterone biosynthetic process"/>
    <property type="evidence" value="ECO:0000315"/>
    <property type="project" value="UniProtKB"/>
</dbReference>
<dbReference type="GO" id="GO:2000798">
    <property type="term" value="P:negative regulation of amniotic stem cell differentiation"/>
    <property type="evidence" value="ECO:0000250"/>
    <property type="project" value="UniProtKB"/>
</dbReference>
<dbReference type="GO" id="GO:0045955">
    <property type="term" value="P:negative regulation of calcium ion-dependent exocytosis"/>
    <property type="evidence" value="ECO:0000315"/>
    <property type="project" value="UniProtKB"/>
</dbReference>
<dbReference type="GO" id="GO:0008285">
    <property type="term" value="P:negative regulation of cell population proliferation"/>
    <property type="evidence" value="ECO:0000266"/>
    <property type="project" value="RGD"/>
</dbReference>
<dbReference type="GO" id="GO:2000065">
    <property type="term" value="P:negative regulation of cortisol biosynthetic process"/>
    <property type="evidence" value="ECO:0000315"/>
    <property type="project" value="UniProtKB"/>
</dbReference>
<dbReference type="GO" id="GO:2000706">
    <property type="term" value="P:negative regulation of dense core granule biogenesis"/>
    <property type="evidence" value="ECO:0000315"/>
    <property type="project" value="UniProtKB"/>
</dbReference>
<dbReference type="GO" id="GO:0045892">
    <property type="term" value="P:negative regulation of DNA-templated transcription"/>
    <property type="evidence" value="ECO:0000314"/>
    <property type="project" value="UniProtKB"/>
</dbReference>
<dbReference type="GO" id="GO:0010629">
    <property type="term" value="P:negative regulation of gene expression"/>
    <property type="evidence" value="ECO:0000315"/>
    <property type="project" value="UniProtKB"/>
</dbReference>
<dbReference type="GO" id="GO:0046676">
    <property type="term" value="P:negative regulation of insulin secretion"/>
    <property type="evidence" value="ECO:0000250"/>
    <property type="project" value="UniProtKB"/>
</dbReference>
<dbReference type="GO" id="GO:2000740">
    <property type="term" value="P:negative regulation of mesenchymal stem cell differentiation"/>
    <property type="evidence" value="ECO:0000266"/>
    <property type="project" value="RGD"/>
</dbReference>
<dbReference type="GO" id="GO:1902894">
    <property type="term" value="P:negative regulation of miRNA transcription"/>
    <property type="evidence" value="ECO:0000266"/>
    <property type="project" value="RGD"/>
</dbReference>
<dbReference type="GO" id="GO:0050768">
    <property type="term" value="P:negative regulation of neurogenesis"/>
    <property type="evidence" value="ECO:0000250"/>
    <property type="project" value="UniProtKB"/>
</dbReference>
<dbReference type="GO" id="GO:0045665">
    <property type="term" value="P:negative regulation of neuron differentiation"/>
    <property type="evidence" value="ECO:0000315"/>
    <property type="project" value="RGD"/>
</dbReference>
<dbReference type="GO" id="GO:0000122">
    <property type="term" value="P:negative regulation of transcription by RNA polymerase II"/>
    <property type="evidence" value="ECO:0000315"/>
    <property type="project" value="UniProtKB"/>
</dbReference>
<dbReference type="GO" id="GO:0050877">
    <property type="term" value="P:nervous system process"/>
    <property type="evidence" value="ECO:0000250"/>
    <property type="project" value="UniProtKB"/>
</dbReference>
<dbReference type="GO" id="GO:0050885">
    <property type="term" value="P:neuromuscular process controlling balance"/>
    <property type="evidence" value="ECO:0000250"/>
    <property type="project" value="UniProtKB"/>
</dbReference>
<dbReference type="GO" id="GO:0030182">
    <property type="term" value="P:neuron differentiation"/>
    <property type="evidence" value="ECO:0000270"/>
    <property type="project" value="RGD"/>
</dbReference>
<dbReference type="GO" id="GO:0097150">
    <property type="term" value="P:neuronal stem cell population maintenance"/>
    <property type="evidence" value="ECO:0000250"/>
    <property type="project" value="UniProtKB"/>
</dbReference>
<dbReference type="GO" id="GO:0043065">
    <property type="term" value="P:positive regulation of apoptotic process"/>
    <property type="evidence" value="ECO:0000266"/>
    <property type="project" value="RGD"/>
</dbReference>
<dbReference type="GO" id="GO:0045893">
    <property type="term" value="P:positive regulation of DNA-templated transcription"/>
    <property type="evidence" value="ECO:0000266"/>
    <property type="project" value="RGD"/>
</dbReference>
<dbReference type="GO" id="GO:0010628">
    <property type="term" value="P:positive regulation of gene expression"/>
    <property type="evidence" value="ECO:0000250"/>
    <property type="project" value="UniProtKB"/>
</dbReference>
<dbReference type="GO" id="GO:0045666">
    <property type="term" value="P:positive regulation of neuron differentiation"/>
    <property type="evidence" value="ECO:0000250"/>
    <property type="project" value="UniProtKB"/>
</dbReference>
<dbReference type="GO" id="GO:0043068">
    <property type="term" value="P:positive regulation of programmed cell death"/>
    <property type="evidence" value="ECO:0000315"/>
    <property type="project" value="UniProtKB"/>
</dbReference>
<dbReference type="GO" id="GO:1902459">
    <property type="term" value="P:positive regulation of stem cell population maintenance"/>
    <property type="evidence" value="ECO:0000250"/>
    <property type="project" value="UniProtKB"/>
</dbReference>
<dbReference type="GO" id="GO:0045944">
    <property type="term" value="P:positive regulation of transcription by RNA polymerase II"/>
    <property type="evidence" value="ECO:0000318"/>
    <property type="project" value="GO_Central"/>
</dbReference>
<dbReference type="GO" id="GO:0000381">
    <property type="term" value="P:regulation of alternative mRNA splicing, via spliceosome"/>
    <property type="evidence" value="ECO:0000250"/>
    <property type="project" value="UniProtKB"/>
</dbReference>
<dbReference type="GO" id="GO:0006355">
    <property type="term" value="P:regulation of DNA-templated transcription"/>
    <property type="evidence" value="ECO:0000250"/>
    <property type="project" value="UniProtKB"/>
</dbReference>
<dbReference type="GO" id="GO:0010468">
    <property type="term" value="P:regulation of gene expression"/>
    <property type="evidence" value="ECO:0000266"/>
    <property type="project" value="RGD"/>
</dbReference>
<dbReference type="GO" id="GO:0045667">
    <property type="term" value="P:regulation of osteoblast differentiation"/>
    <property type="evidence" value="ECO:0000250"/>
    <property type="project" value="UniProtKB"/>
</dbReference>
<dbReference type="GO" id="GO:0045471">
    <property type="term" value="P:response to ethanol"/>
    <property type="evidence" value="ECO:0000270"/>
    <property type="project" value="RGD"/>
</dbReference>
<dbReference type="GO" id="GO:0001666">
    <property type="term" value="P:response to hypoxia"/>
    <property type="evidence" value="ECO:0000250"/>
    <property type="project" value="UniProtKB"/>
</dbReference>
<dbReference type="GO" id="GO:0002931">
    <property type="term" value="P:response to ischemia"/>
    <property type="evidence" value="ECO:0000314"/>
    <property type="project" value="UniProtKB"/>
</dbReference>
<dbReference type="GO" id="GO:0035019">
    <property type="term" value="P:somatic stem cell population maintenance"/>
    <property type="evidence" value="ECO:0000250"/>
    <property type="project" value="UniProtKB"/>
</dbReference>
<dbReference type="FunFam" id="3.30.160.60:FF:002187">
    <property type="entry name" value="RE1-silencing transcription factor"/>
    <property type="match status" value="1"/>
</dbReference>
<dbReference type="FunFam" id="3.30.160.60:FF:000448">
    <property type="entry name" value="RE1-silencing transcription factor A"/>
    <property type="match status" value="1"/>
</dbReference>
<dbReference type="FunFam" id="3.30.160.60:FF:000662">
    <property type="entry name" value="RE1-silencing transcription factor A"/>
    <property type="match status" value="1"/>
</dbReference>
<dbReference type="FunFam" id="3.30.160.60:FF:000805">
    <property type="entry name" value="RE1-silencing transcription factor B"/>
    <property type="match status" value="1"/>
</dbReference>
<dbReference type="FunFam" id="3.30.160.60:FF:000952">
    <property type="entry name" value="RE1-silencing transcription factor B"/>
    <property type="match status" value="1"/>
</dbReference>
<dbReference type="Gene3D" id="3.30.160.60">
    <property type="entry name" value="Classic Zinc Finger"/>
    <property type="match status" value="5"/>
</dbReference>
<dbReference type="InterPro" id="IPR050688">
    <property type="entry name" value="Zinc_finger/UBP_domain"/>
</dbReference>
<dbReference type="InterPro" id="IPR036236">
    <property type="entry name" value="Znf_C2H2_sf"/>
</dbReference>
<dbReference type="InterPro" id="IPR013087">
    <property type="entry name" value="Znf_C2H2_type"/>
</dbReference>
<dbReference type="PANTHER" id="PTHR24403:SF102">
    <property type="entry name" value="RE1-SILENCING TRANSCRIPTION FACTOR"/>
    <property type="match status" value="1"/>
</dbReference>
<dbReference type="PANTHER" id="PTHR24403">
    <property type="entry name" value="ZINC FINGER PROTEIN"/>
    <property type="match status" value="1"/>
</dbReference>
<dbReference type="Pfam" id="PF00096">
    <property type="entry name" value="zf-C2H2"/>
    <property type="match status" value="1"/>
</dbReference>
<dbReference type="Pfam" id="PF24540">
    <property type="entry name" value="zf-C2H2_REST"/>
    <property type="match status" value="1"/>
</dbReference>
<dbReference type="SMART" id="SM00355">
    <property type="entry name" value="ZnF_C2H2"/>
    <property type="match status" value="9"/>
</dbReference>
<dbReference type="SUPFAM" id="SSF57667">
    <property type="entry name" value="beta-beta-alpha zinc fingers"/>
    <property type="match status" value="3"/>
</dbReference>
<dbReference type="PROSITE" id="PS00028">
    <property type="entry name" value="ZINC_FINGER_C2H2_1"/>
    <property type="match status" value="1"/>
</dbReference>
<dbReference type="PROSITE" id="PS50157">
    <property type="entry name" value="ZINC_FINGER_C2H2_2"/>
    <property type="match status" value="6"/>
</dbReference>
<feature type="chain" id="PRO_0000269549" description="RE1-silencing transcription factor">
    <location>
        <begin position="1"/>
        <end position="1069"/>
    </location>
</feature>
<feature type="zinc finger region" description="C2H2-type 1" evidence="3">
    <location>
        <begin position="158"/>
        <end position="180"/>
    </location>
</feature>
<feature type="zinc finger region" description="C2H2-type 2" evidence="3">
    <location>
        <begin position="215"/>
        <end position="237"/>
    </location>
</feature>
<feature type="zinc finger region" description="C2H2-type 3" evidence="3">
    <location>
        <begin position="247"/>
        <end position="269"/>
    </location>
</feature>
<feature type="zinc finger region" description="C2H2-type 4" evidence="3">
    <location>
        <begin position="275"/>
        <end position="297"/>
    </location>
</feature>
<feature type="zinc finger region" description="C2H2-type 5" evidence="3">
    <location>
        <begin position="303"/>
        <end position="325"/>
    </location>
</feature>
<feature type="zinc finger region" description="C2H2-type 6" evidence="3">
    <location>
        <begin position="331"/>
        <end position="354"/>
    </location>
</feature>
<feature type="zinc finger region" description="C2H2-type 7" evidence="3">
    <location>
        <begin position="360"/>
        <end position="382"/>
    </location>
</feature>
<feature type="zinc finger region" description="C2H2-type 8" evidence="3">
    <location>
        <begin position="388"/>
        <end position="411"/>
    </location>
</feature>
<feature type="zinc finger region" description="C2H2-type 9" evidence="3">
    <location>
        <begin position="1032"/>
        <end position="1054"/>
    </location>
</feature>
<feature type="region of interest" description="Interaction with SIN3A" evidence="1">
    <location>
        <begin position="32"/>
        <end position="121"/>
    </location>
</feature>
<feature type="region of interest" description="Interaction with SIN3B" evidence="1">
    <location>
        <begin position="43"/>
        <end position="57"/>
    </location>
</feature>
<feature type="region of interest" description="Disordered" evidence="4">
    <location>
        <begin position="85"/>
        <end position="104"/>
    </location>
</feature>
<feature type="region of interest" description="Interaction with ZFP90" evidence="1">
    <location>
        <begin position="144"/>
        <end position="417"/>
    </location>
</feature>
<feature type="region of interest" description="Required for binding to the neuron-restrictive silencer element" evidence="2">
    <location>
        <begin position="200"/>
        <end position="211"/>
    </location>
</feature>
<feature type="region of interest" description="Disordered" evidence="4">
    <location>
        <begin position="425"/>
        <end position="737"/>
    </location>
</feature>
<feature type="region of interest" description="Disordered" evidence="4">
    <location>
        <begin position="830"/>
        <end position="1022"/>
    </location>
</feature>
<feature type="region of interest" description="Interaction with RCOR1" evidence="1">
    <location>
        <begin position="981"/>
        <end position="1059"/>
    </location>
</feature>
<feature type="compositionally biased region" description="Basic and acidic residues" evidence="4">
    <location>
        <begin position="451"/>
        <end position="482"/>
    </location>
</feature>
<feature type="compositionally biased region" description="Polar residues" evidence="4">
    <location>
        <begin position="484"/>
        <end position="493"/>
    </location>
</feature>
<feature type="compositionally biased region" description="Basic and acidic residues" evidence="4">
    <location>
        <begin position="498"/>
        <end position="511"/>
    </location>
</feature>
<feature type="compositionally biased region" description="Basic and acidic residues" evidence="4">
    <location>
        <begin position="554"/>
        <end position="576"/>
    </location>
</feature>
<feature type="compositionally biased region" description="Basic residues" evidence="4">
    <location>
        <begin position="584"/>
        <end position="600"/>
    </location>
</feature>
<feature type="compositionally biased region" description="Polar residues" evidence="4">
    <location>
        <begin position="630"/>
        <end position="643"/>
    </location>
</feature>
<feature type="compositionally biased region" description="Pro residues" evidence="4">
    <location>
        <begin position="679"/>
        <end position="706"/>
    </location>
</feature>
<feature type="compositionally biased region" description="Pro residues" evidence="4">
    <location>
        <begin position="713"/>
        <end position="734"/>
    </location>
</feature>
<feature type="compositionally biased region" description="Basic and acidic residues" evidence="4">
    <location>
        <begin position="851"/>
        <end position="860"/>
    </location>
</feature>
<feature type="compositionally biased region" description="Basic and acidic residues" evidence="4">
    <location>
        <begin position="876"/>
        <end position="886"/>
    </location>
</feature>
<feature type="compositionally biased region" description="Low complexity" evidence="4">
    <location>
        <begin position="894"/>
        <end position="904"/>
    </location>
</feature>
<feature type="compositionally biased region" description="Basic and acidic residues" evidence="4">
    <location>
        <begin position="930"/>
        <end position="943"/>
    </location>
</feature>
<feature type="compositionally biased region" description="Low complexity" evidence="4">
    <location>
        <begin position="957"/>
        <end position="968"/>
    </location>
</feature>
<feature type="modified residue" description="Phosphoserine" evidence="12">
    <location>
        <position position="948"/>
    </location>
</feature>
<feature type="splice variant" id="VSP_022073" description="In isoform 3." evidence="11">
    <location>
        <begin position="300"/>
        <end position="1069"/>
    </location>
</feature>
<feature type="splice variant" id="VSP_022074" description="In isoform 2." evidence="11">
    <original>ERP</original>
    <variation>KRA</variation>
    <location>
        <begin position="300"/>
        <end position="302"/>
    </location>
</feature>
<feature type="splice variant" id="VSP_022075" description="In isoform 2." evidence="11">
    <location>
        <begin position="303"/>
        <end position="1069"/>
    </location>
</feature>
<feature type="splice variant" id="VSP_022076" description="In isoform 7." evidence="11">
    <original>EKPFKCDQC</original>
    <variation>CDLVGYVFR</variation>
    <location>
        <begin position="328"/>
        <end position="336"/>
    </location>
</feature>
<feature type="splice variant" id="VSP_022077" description="In isoform 6." evidence="11">
    <original>EKPFK</original>
    <variation>CDLVG</variation>
    <location>
        <begin position="328"/>
        <end position="332"/>
    </location>
</feature>
<feature type="splice variant" id="VSP_022078" description="In isoform 5." evidence="11">
    <original>EK</original>
    <variation>AI</variation>
    <location>
        <begin position="328"/>
        <end position="329"/>
    </location>
</feature>
<feature type="splice variant" id="VSP_022079" description="In isoform 4." evidence="11">
    <original>E</original>
    <variation>W</variation>
    <location>
        <position position="328"/>
    </location>
</feature>
<feature type="splice variant" id="VSP_022080" description="In isoform 4." evidence="11">
    <location>
        <begin position="329"/>
        <end position="1069"/>
    </location>
</feature>
<feature type="splice variant" id="VSP_022081" description="In isoform 5." evidence="11">
    <location>
        <begin position="330"/>
        <end position="1069"/>
    </location>
</feature>
<feature type="splice variant" id="VSP_022082" description="In isoform 6." evidence="11">
    <location>
        <begin position="333"/>
        <end position="1069"/>
    </location>
</feature>
<feature type="splice variant" id="VSP_022083" description="In isoform 7." evidence="11">
    <location>
        <begin position="337"/>
        <end position="1069"/>
    </location>
</feature>
<name>REST_RAT</name>
<reference key="1">
    <citation type="journal article" date="1998" name="J. Neurosci.">
        <title>Neuronal expression of zinc finger transcription factor REST/NRSF/XBR gene.</title>
        <authorList>
            <person name="Palm K."/>
            <person name="Belluardo N."/>
            <person name="Metsis M."/>
            <person name="Timmusk T."/>
        </authorList>
    </citation>
    <scope>NUCLEOTIDE SEQUENCE [MRNA] (ISOFORMS 1; 2; 3; 4; 5; 6 AND 7)</scope>
    <scope>FUNCTION</scope>
    <scope>TISSUE SPECIFICITY</scope>
    <scope>INDUCTION</scope>
    <scope>DEVELOPMENTAL STAGE</scope>
</reference>
<reference key="2">
    <citation type="journal article" date="1999" name="Mol. Cell. Biol.">
        <title>Protein kinase A regulates cholinergic gene expression in PC12 cells: REST4 silences the silencing activity of neuron-restrictive silencer factor/REST.</title>
        <authorList>
            <person name="Shimojo M."/>
            <person name="Paquette A.J."/>
            <person name="Anderson D.J."/>
            <person name="Hersh L.B."/>
        </authorList>
    </citation>
    <scope>SUBCELLULAR LOCATION</scope>
</reference>
<reference key="3">
    <citation type="journal article" date="2003" name="J. Neurosci.">
        <title>Ischemic insults derepress the gene silencer REST in neurons destined to die.</title>
        <authorList>
            <person name="Calderone A."/>
            <person name="Jover T."/>
            <person name="Noh K.M."/>
            <person name="Tanaka H."/>
            <person name="Yokota H."/>
            <person name="Lin Y."/>
            <person name="Grooms S.Y."/>
            <person name="Regis R."/>
            <person name="Bennett M.V."/>
            <person name="Zukin R.S."/>
        </authorList>
    </citation>
    <scope>FUNCTION</scope>
    <scope>SUBCELLULAR LOCATION</scope>
    <scope>TISSUE SPECIFICITY</scope>
    <scope>INDUCTION BY ISCHEMIA</scope>
</reference>
<reference key="4">
    <citation type="journal article" date="2012" name="Nat. Commun.">
        <title>Quantitative maps of protein phosphorylation sites across 14 different rat organs and tissues.</title>
        <authorList>
            <person name="Lundby A."/>
            <person name="Secher A."/>
            <person name="Lage K."/>
            <person name="Nordsborg N.B."/>
            <person name="Dmytriyev A."/>
            <person name="Lundby C."/>
            <person name="Olsen J.V."/>
        </authorList>
    </citation>
    <scope>PHOSPHORYLATION [LARGE SCALE ANALYSIS] AT SER-948</scope>
    <scope>IDENTIFICATION BY MASS SPECTROMETRY [LARGE SCALE ANALYSIS]</scope>
</reference>
<reference key="5">
    <citation type="journal article" date="2012" name="Nat. Neurosci.">
        <title>REST-dependent epigenetic remodeling promotes the developmental switch in synaptic NMDA receptors.</title>
        <authorList>
            <person name="Rodenas-Ruano A."/>
            <person name="Chavez A.E."/>
            <person name="Cossio M.J."/>
            <person name="Castillo P.E."/>
            <person name="Zukin R.S."/>
        </authorList>
    </citation>
    <scope>FUNCTION</scope>
    <scope>SUBCELLULAR LOCATION</scope>
    <scope>TISSUE SPECIFICITY</scope>
    <scope>DEVELOPMENTAL STAGE</scope>
    <scope>INDUCTION</scope>
</reference>
<reference key="6">
    <citation type="journal article" date="2012" name="Proc. Natl. Acad. Sci. U.S.A.">
        <title>Repressor element-1 silencing transcription factor (REST)-dependent epigenetic remodeling is critical to ischemia-induced neuronal death.</title>
        <authorList>
            <person name="Noh K.M."/>
            <person name="Hwang J.Y."/>
            <person name="Follenzi A."/>
            <person name="Athanasiadou R."/>
            <person name="Miyawaki T."/>
            <person name="Greally J.M."/>
            <person name="Bennett M.V."/>
            <person name="Zukin R.S."/>
        </authorList>
    </citation>
    <scope>FUNCTION</scope>
    <scope>SUBCELLULAR LOCATION</scope>
    <scope>TISSUE SPECIFICITY</scope>
    <scope>INDUCTION BY ISCHEMIA</scope>
</reference>
<reference key="7">
    <citation type="journal article" date="2014" name="J. Mol. Biol.">
        <title>The gene silencing transcription factor REST represses miR-132 expression in hippocampal neurons destined to die.</title>
        <authorList>
            <person name="Hwang J.Y."/>
            <person name="Kaneko N."/>
            <person name="Noh K.M."/>
            <person name="Pontarelli F."/>
            <person name="Zukin R.S."/>
        </authorList>
    </citation>
    <scope>FUNCTION</scope>
    <scope>TISSUE SPECIFICITY</scope>
    <scope>INDUCTION BY ISCHEMIA</scope>
</reference>
<keyword id="KW-0025">Alternative splicing</keyword>
<keyword id="KW-0963">Cytoplasm</keyword>
<keyword id="KW-0479">Metal-binding</keyword>
<keyword id="KW-0539">Nucleus</keyword>
<keyword id="KW-0597">Phosphoprotein</keyword>
<keyword id="KW-1185">Reference proteome</keyword>
<keyword id="KW-0677">Repeat</keyword>
<keyword id="KW-0678">Repressor</keyword>
<keyword id="KW-0804">Transcription</keyword>
<keyword id="KW-0805">Transcription regulation</keyword>
<keyword id="KW-0832">Ubl conjugation</keyword>
<keyword id="KW-0862">Zinc</keyword>
<keyword id="KW-0863">Zinc-finger</keyword>
<organism>
    <name type="scientific">Rattus norvegicus</name>
    <name type="common">Rat</name>
    <dbReference type="NCBI Taxonomy" id="10116"/>
    <lineage>
        <taxon>Eukaryota</taxon>
        <taxon>Metazoa</taxon>
        <taxon>Chordata</taxon>
        <taxon>Craniata</taxon>
        <taxon>Vertebrata</taxon>
        <taxon>Euteleostomi</taxon>
        <taxon>Mammalia</taxon>
        <taxon>Eutheria</taxon>
        <taxon>Euarchontoglires</taxon>
        <taxon>Glires</taxon>
        <taxon>Rodentia</taxon>
        <taxon>Myomorpha</taxon>
        <taxon>Muroidea</taxon>
        <taxon>Muridae</taxon>
        <taxon>Murinae</taxon>
        <taxon>Rattus</taxon>
    </lineage>
</organism>
<sequence length="1069" mass="117126">MATQVMGQSSGGGSLFNNSGNMGMALPNDMYDLHDLSKAELAAPQLIMLANVALTGEVNGSCCDYLVGEERQMAELMPVGDNHFSDSEGEGLEESAELKGDPSGLDNMELRSLELSVVEPQPVFEASAAPEVYSSNKDPAPEAPVAEDKCKNLKAKPFRCKPCQYEAESEEQFVHHIRVHSAKKFFVEESAEKQAKARESGASPSEEGEFSKGPIRCDRCGYNTNRYDHYTAHLKHHLRAGDNERVYKCIICTYTTVSEYHWRKHLRNHFPRKVYTCSKCNYFSTEKNNYVQHVRTHTGERPYKCELCPYSSSQKTHLTRHMRTHSGEKPFKCDQCNYVASNQHEVTRHARQVHNGPKPLNCPHCDYKTADRSNFKKHVELHVNPRQFNCPVCDYAASKKCNLQYHFKSKHPTCPSKTMDVSKVKLKKTKRREADLHRDAAAAATEQTDTEQAKTKGVDASARRSERPVKGVGKDVPKEKKPCSNASVVQVTTRTRKSAVETKAAEGKHTDGQTGNNAEKSSKAKKSKRKMDAEAHPSVEPVTEGPVTKKKKTESKPKTSGEVPKGSRVEDRKADKQQSASIKKGGKKTALKTKTAKKGSKLAPKWVGHTEPSSEMAQGGESPVPALTQAVVTPSGSTQTELSSPMDIAQTEPAQMDVSQTGPPQVQRPLPVEPAQLEPSPPQEPPQVEPPACVEPPPPVEPPCPMEPAEMEPSPPMEPSQVEPPPHLEPPLPMELPQVELPPVEDCQKELPPVEHAQTKVAQTGPTQVGAVQEEPLFCLRATSSQANQKVISPKDRAKEKLSVLSEMARQEQVLIEVGLVPVRDSQLLKASKSAPDLPAPPSPLPKGHLRREETPKDQEMFSDGEGNKVSPLEKGGTEEAGESRAELAAPMESTSALSSEQSSNAPDGETLHSECQADSTAVCEMEVDTEQKTDRVPLKDSAVEPVSPLNPRVDPEAAAPAVVASPPITLAESQEIDEDEGIHSHDGSDLSDNMSEGSDDSGLHGARPAPQEATSKSGKEGLAVKVTEGEFVCIFCDRSFRKEKDYSKHLNRHLVNVYFLEEAAEEQE</sequence>